<keyword id="KW-0312">Gluconeogenesis</keyword>
<keyword id="KW-0324">Glycolysis</keyword>
<keyword id="KW-0413">Isomerase</keyword>
<keyword id="KW-1185">Reference proteome</keyword>
<dbReference type="EC" id="5.4.2.11" evidence="1"/>
<dbReference type="EMBL" id="CP000555">
    <property type="protein sequence ID" value="ABM93675.1"/>
    <property type="molecule type" value="Genomic_DNA"/>
</dbReference>
<dbReference type="RefSeq" id="WP_011828313.1">
    <property type="nucleotide sequence ID" value="NC_008825.1"/>
</dbReference>
<dbReference type="SMR" id="A2SDN6"/>
<dbReference type="STRING" id="420662.Mpe_A0713"/>
<dbReference type="KEGG" id="mpt:Mpe_A0713"/>
<dbReference type="eggNOG" id="COG0588">
    <property type="taxonomic scope" value="Bacteria"/>
</dbReference>
<dbReference type="HOGENOM" id="CLU_033323_1_1_4"/>
<dbReference type="UniPathway" id="UPA00109">
    <property type="reaction ID" value="UER00186"/>
</dbReference>
<dbReference type="Proteomes" id="UP000000366">
    <property type="component" value="Chromosome"/>
</dbReference>
<dbReference type="GO" id="GO:0004619">
    <property type="term" value="F:phosphoglycerate mutase activity"/>
    <property type="evidence" value="ECO:0007669"/>
    <property type="project" value="UniProtKB-EC"/>
</dbReference>
<dbReference type="GO" id="GO:0006094">
    <property type="term" value="P:gluconeogenesis"/>
    <property type="evidence" value="ECO:0007669"/>
    <property type="project" value="UniProtKB-UniRule"/>
</dbReference>
<dbReference type="GO" id="GO:0006096">
    <property type="term" value="P:glycolytic process"/>
    <property type="evidence" value="ECO:0007669"/>
    <property type="project" value="UniProtKB-UniRule"/>
</dbReference>
<dbReference type="CDD" id="cd07067">
    <property type="entry name" value="HP_PGM_like"/>
    <property type="match status" value="1"/>
</dbReference>
<dbReference type="FunFam" id="3.40.50.1240:FF:000003">
    <property type="entry name" value="2,3-bisphosphoglycerate-dependent phosphoglycerate mutase"/>
    <property type="match status" value="1"/>
</dbReference>
<dbReference type="Gene3D" id="3.40.50.1240">
    <property type="entry name" value="Phosphoglycerate mutase-like"/>
    <property type="match status" value="1"/>
</dbReference>
<dbReference type="HAMAP" id="MF_01039">
    <property type="entry name" value="PGAM_GpmA"/>
    <property type="match status" value="1"/>
</dbReference>
<dbReference type="InterPro" id="IPR013078">
    <property type="entry name" value="His_Pase_superF_clade-1"/>
</dbReference>
<dbReference type="InterPro" id="IPR029033">
    <property type="entry name" value="His_PPase_superfam"/>
</dbReference>
<dbReference type="InterPro" id="IPR001345">
    <property type="entry name" value="PG/BPGM_mutase_AS"/>
</dbReference>
<dbReference type="InterPro" id="IPR005952">
    <property type="entry name" value="Phosphogly_mut1"/>
</dbReference>
<dbReference type="NCBIfam" id="TIGR01258">
    <property type="entry name" value="pgm_1"/>
    <property type="match status" value="1"/>
</dbReference>
<dbReference type="NCBIfam" id="NF010713">
    <property type="entry name" value="PRK14115.1"/>
    <property type="match status" value="1"/>
</dbReference>
<dbReference type="PANTHER" id="PTHR11931">
    <property type="entry name" value="PHOSPHOGLYCERATE MUTASE"/>
    <property type="match status" value="1"/>
</dbReference>
<dbReference type="Pfam" id="PF00300">
    <property type="entry name" value="His_Phos_1"/>
    <property type="match status" value="1"/>
</dbReference>
<dbReference type="PIRSF" id="PIRSF000709">
    <property type="entry name" value="6PFK_2-Ptase"/>
    <property type="match status" value="1"/>
</dbReference>
<dbReference type="SMART" id="SM00855">
    <property type="entry name" value="PGAM"/>
    <property type="match status" value="1"/>
</dbReference>
<dbReference type="SUPFAM" id="SSF53254">
    <property type="entry name" value="Phosphoglycerate mutase-like"/>
    <property type="match status" value="1"/>
</dbReference>
<dbReference type="PROSITE" id="PS00175">
    <property type="entry name" value="PG_MUTASE"/>
    <property type="match status" value="1"/>
</dbReference>
<accession>A2SDN6</accession>
<protein>
    <recommendedName>
        <fullName evidence="1">2,3-bisphosphoglycerate-dependent phosphoglycerate mutase</fullName>
        <shortName evidence="1">BPG-dependent PGAM</shortName>
        <shortName evidence="1">PGAM</shortName>
        <shortName evidence="1">Phosphoglyceromutase</shortName>
        <shortName evidence="1">dPGM</shortName>
        <ecNumber evidence="1">5.4.2.11</ecNumber>
    </recommendedName>
</protein>
<organism>
    <name type="scientific">Methylibium petroleiphilum (strain ATCC BAA-1232 / LMG 22953 / PM1)</name>
    <dbReference type="NCBI Taxonomy" id="420662"/>
    <lineage>
        <taxon>Bacteria</taxon>
        <taxon>Pseudomonadati</taxon>
        <taxon>Pseudomonadota</taxon>
        <taxon>Betaproteobacteria</taxon>
        <taxon>Burkholderiales</taxon>
        <taxon>Sphaerotilaceae</taxon>
        <taxon>Methylibium</taxon>
    </lineage>
</organism>
<comment type="function">
    <text evidence="1">Catalyzes the interconversion of 2-phosphoglycerate and 3-phosphoglycerate.</text>
</comment>
<comment type="catalytic activity">
    <reaction evidence="1">
        <text>(2R)-2-phosphoglycerate = (2R)-3-phosphoglycerate</text>
        <dbReference type="Rhea" id="RHEA:15901"/>
        <dbReference type="ChEBI" id="CHEBI:58272"/>
        <dbReference type="ChEBI" id="CHEBI:58289"/>
        <dbReference type="EC" id="5.4.2.11"/>
    </reaction>
</comment>
<comment type="pathway">
    <text evidence="1">Carbohydrate degradation; glycolysis; pyruvate from D-glyceraldehyde 3-phosphate: step 3/5.</text>
</comment>
<comment type="subunit">
    <text evidence="1">Homodimer.</text>
</comment>
<comment type="similarity">
    <text evidence="1">Belongs to the phosphoglycerate mutase family. BPG-dependent PGAM subfamily.</text>
</comment>
<proteinExistence type="inferred from homology"/>
<evidence type="ECO:0000255" key="1">
    <source>
        <dbReference type="HAMAP-Rule" id="MF_01039"/>
    </source>
</evidence>
<reference key="1">
    <citation type="journal article" date="2007" name="J. Bacteriol.">
        <title>Whole-genome analysis of the methyl tert-butyl ether-degrading beta-proteobacterium Methylibium petroleiphilum PM1.</title>
        <authorList>
            <person name="Kane S.R."/>
            <person name="Chakicherla A.Y."/>
            <person name="Chain P.S.G."/>
            <person name="Schmidt R."/>
            <person name="Shin M.W."/>
            <person name="Legler T.C."/>
            <person name="Scow K.M."/>
            <person name="Larimer F.W."/>
            <person name="Lucas S.M."/>
            <person name="Richardson P.M."/>
            <person name="Hristova K.R."/>
        </authorList>
    </citation>
    <scope>NUCLEOTIDE SEQUENCE [LARGE SCALE GENOMIC DNA]</scope>
    <source>
        <strain>ATCC BAA-1232 / LMG 22953 / PM1</strain>
    </source>
</reference>
<feature type="chain" id="PRO_1000064075" description="2,3-bisphosphoglycerate-dependent phosphoglycerate mutase">
    <location>
        <begin position="1"/>
        <end position="247"/>
    </location>
</feature>
<feature type="active site" description="Tele-phosphohistidine intermediate" evidence="1">
    <location>
        <position position="9"/>
    </location>
</feature>
<feature type="active site" description="Proton donor/acceptor" evidence="1">
    <location>
        <position position="87"/>
    </location>
</feature>
<feature type="binding site" evidence="1">
    <location>
        <begin position="8"/>
        <end position="15"/>
    </location>
    <ligand>
        <name>substrate</name>
    </ligand>
</feature>
<feature type="binding site" evidence="1">
    <location>
        <begin position="21"/>
        <end position="22"/>
    </location>
    <ligand>
        <name>substrate</name>
    </ligand>
</feature>
<feature type="binding site" evidence="1">
    <location>
        <position position="60"/>
    </location>
    <ligand>
        <name>substrate</name>
    </ligand>
</feature>
<feature type="binding site" evidence="1">
    <location>
        <begin position="87"/>
        <end position="90"/>
    </location>
    <ligand>
        <name>substrate</name>
    </ligand>
</feature>
<feature type="binding site" evidence="1">
    <location>
        <position position="98"/>
    </location>
    <ligand>
        <name>substrate</name>
    </ligand>
</feature>
<feature type="binding site" evidence="1">
    <location>
        <begin position="114"/>
        <end position="115"/>
    </location>
    <ligand>
        <name>substrate</name>
    </ligand>
</feature>
<feature type="binding site" evidence="1">
    <location>
        <begin position="183"/>
        <end position="184"/>
    </location>
    <ligand>
        <name>substrate</name>
    </ligand>
</feature>
<feature type="site" description="Transition state stabilizer" evidence="1">
    <location>
        <position position="182"/>
    </location>
</feature>
<name>GPMA_METPP</name>
<gene>
    <name evidence="1" type="primary">gpmA</name>
    <name type="ordered locus">Mpe_A0713</name>
</gene>
<sequence>MTQLVLIRHGESTWNLENRFTGWTDVELTPTGVAQAQQAGRLLKQAGIDFDTVYTSVLKRAIWTAWHCLDGMDRTWLPVIKDWRLNERHYGGLQGLNKADMAKQFGDEQVLLWRRSYDVPPPPLEANDPRSERSDVRYAKLAANQVPLTECLKDTVARVLPLWYGTLAPAIAAGQRLVIVAHGNSIRALVKHLNNISDADIVGVNIPNGIPLVYDLDANLKPTSKYYLGGADAAAQAASVSALQADG</sequence>